<organism>
    <name type="scientific">Oryza sativa subsp. japonica</name>
    <name type="common">Rice</name>
    <dbReference type="NCBI Taxonomy" id="39947"/>
    <lineage>
        <taxon>Eukaryota</taxon>
        <taxon>Viridiplantae</taxon>
        <taxon>Streptophyta</taxon>
        <taxon>Embryophyta</taxon>
        <taxon>Tracheophyta</taxon>
        <taxon>Spermatophyta</taxon>
        <taxon>Magnoliopsida</taxon>
        <taxon>Liliopsida</taxon>
        <taxon>Poales</taxon>
        <taxon>Poaceae</taxon>
        <taxon>BOP clade</taxon>
        <taxon>Oryzoideae</taxon>
        <taxon>Oryzeae</taxon>
        <taxon>Oryzinae</taxon>
        <taxon>Oryza</taxon>
        <taxon>Oryza sativa</taxon>
    </lineage>
</organism>
<comment type="function">
    <text evidence="1">Aquaporins facilitate the transport of water and small neutral solutes across cell membranes.</text>
</comment>
<comment type="subcellular location">
    <subcellularLocation>
        <location evidence="1">Cell membrane</location>
        <topology evidence="1">Multi-pass membrane protein</topology>
    </subcellularLocation>
</comment>
<comment type="tissue specificity">
    <text evidence="4">Expressed in roots, leaves and anthers.</text>
</comment>
<comment type="induction">
    <text evidence="4">Circadian-regulation. Expression is higher during the light phase than during the dark phase. Down-regulated by chilling.</text>
</comment>
<comment type="domain">
    <text>Aquaporins contain two tandem repeats each containing three membrane-spanning domains and a pore-forming loop with the signature motif Asn-Pro-Ala (NPA).</text>
</comment>
<comment type="similarity">
    <text evidence="5">Belongs to the MIP/aquaporin (TC 1.A.8) family. PIP (TC 1.A.8.11) subfamily.</text>
</comment>
<comment type="sequence caution" evidence="5">
    <conflict type="frameshift">
        <sequence resource="EMBL-CDS" id="CAE01842"/>
    </conflict>
</comment>
<gene>
    <name type="primary">PIP1-2</name>
    <name type="ordered locus">Os04g0559700</name>
    <name type="ordered locus">LOC_Os04g47220</name>
    <name type="ORF">OsJ_015100</name>
    <name type="ORF">OSJNBa0084K11.2</name>
</gene>
<sequence length="288" mass="30748">MEGKEEDVRLGANKFSERQPIGTAAQGSDDKDYKEPPPAPLFEPGELKSWSFYRAGIAEFMATFLFLYITVLTVMGVNNSTSKCATVGIQGIAWSFGGMIFALVYCTAGISGGHINPAVTFGLFLARKLSLTRALFYMVMQCLGAICGAGVVKGFQKGLYETTGGGANVVAPGYTKGDGLGAEIVGTFILVYTVFSATDAKRNARDSHVPILAPLPIGFAVFLVHLATIPITGTGINPARSLGAAIIYNRGHAWDDHWIFWVGPFIGAALAAIYHQVVIRAIPFKSRS</sequence>
<dbReference type="EMBL" id="AL606687">
    <property type="protein sequence ID" value="CAE01842.2"/>
    <property type="status" value="ALT_FRAME"/>
    <property type="molecule type" value="Genomic_DNA"/>
</dbReference>
<dbReference type="EMBL" id="AP008210">
    <property type="protein sequence ID" value="BAF15455.1"/>
    <property type="molecule type" value="Genomic_DNA"/>
</dbReference>
<dbReference type="EMBL" id="AP014960">
    <property type="protein sequence ID" value="BAS90462.1"/>
    <property type="molecule type" value="Genomic_DNA"/>
</dbReference>
<dbReference type="EMBL" id="CM000141">
    <property type="protein sequence ID" value="EAZ31617.1"/>
    <property type="molecule type" value="Genomic_DNA"/>
</dbReference>
<dbReference type="EMBL" id="AK098849">
    <property type="status" value="NOT_ANNOTATED_CDS"/>
    <property type="molecule type" value="mRNA"/>
</dbReference>
<dbReference type="RefSeq" id="XP_015635466.1">
    <property type="nucleotide sequence ID" value="XM_015779980.1"/>
</dbReference>
<dbReference type="SMR" id="Q7XSQ9"/>
<dbReference type="FunCoup" id="Q7XSQ9">
    <property type="interactions" value="366"/>
</dbReference>
<dbReference type="STRING" id="39947.Q7XSQ9"/>
<dbReference type="PaxDb" id="39947-Q7XSQ9"/>
<dbReference type="EnsemblPlants" id="Os04t0559700-01">
    <property type="protein sequence ID" value="Os04t0559700-01"/>
    <property type="gene ID" value="Os04g0559700"/>
</dbReference>
<dbReference type="Gramene" id="Os04t0559700-01">
    <property type="protein sequence ID" value="Os04t0559700-01"/>
    <property type="gene ID" value="Os04g0559700"/>
</dbReference>
<dbReference type="eggNOG" id="KOG0223">
    <property type="taxonomic scope" value="Eukaryota"/>
</dbReference>
<dbReference type="HOGENOM" id="CLU_020019_3_0_1"/>
<dbReference type="InParanoid" id="Q7XSQ9"/>
<dbReference type="OMA" id="IFWTGAG"/>
<dbReference type="OrthoDB" id="3222at2759"/>
<dbReference type="Proteomes" id="UP000000763">
    <property type="component" value="Chromosome 4"/>
</dbReference>
<dbReference type="Proteomes" id="UP000007752">
    <property type="component" value="Chromosome 4"/>
</dbReference>
<dbReference type="Proteomes" id="UP000059680">
    <property type="component" value="Chromosome 4"/>
</dbReference>
<dbReference type="ExpressionAtlas" id="Q7XSQ9">
    <property type="expression patterns" value="baseline and differential"/>
</dbReference>
<dbReference type="GO" id="GO:0005886">
    <property type="term" value="C:plasma membrane"/>
    <property type="evidence" value="ECO:0000318"/>
    <property type="project" value="GO_Central"/>
</dbReference>
<dbReference type="GO" id="GO:0015250">
    <property type="term" value="F:water channel activity"/>
    <property type="evidence" value="ECO:0000318"/>
    <property type="project" value="GO_Central"/>
</dbReference>
<dbReference type="GO" id="GO:0009414">
    <property type="term" value="P:response to water deprivation"/>
    <property type="evidence" value="ECO:0000318"/>
    <property type="project" value="GO_Central"/>
</dbReference>
<dbReference type="CDD" id="cd00333">
    <property type="entry name" value="MIP"/>
    <property type="match status" value="1"/>
</dbReference>
<dbReference type="FunFam" id="1.20.1080.10:FF:000001">
    <property type="entry name" value="Probable aquaporin PIP1-2"/>
    <property type="match status" value="1"/>
</dbReference>
<dbReference type="Gene3D" id="1.20.1080.10">
    <property type="entry name" value="Glycerol uptake facilitator protein"/>
    <property type="match status" value="1"/>
</dbReference>
<dbReference type="InterPro" id="IPR023271">
    <property type="entry name" value="Aquaporin-like"/>
</dbReference>
<dbReference type="InterPro" id="IPR034294">
    <property type="entry name" value="Aquaporin_transptr"/>
</dbReference>
<dbReference type="InterPro" id="IPR000425">
    <property type="entry name" value="MIP"/>
</dbReference>
<dbReference type="InterPro" id="IPR022357">
    <property type="entry name" value="MIP_CS"/>
</dbReference>
<dbReference type="NCBIfam" id="TIGR00861">
    <property type="entry name" value="MIP"/>
    <property type="match status" value="1"/>
</dbReference>
<dbReference type="PANTHER" id="PTHR45687">
    <property type="entry name" value="AQUAPORIN OR AQUAGLYCEROPORIN RELATED"/>
    <property type="match status" value="1"/>
</dbReference>
<dbReference type="Pfam" id="PF00230">
    <property type="entry name" value="MIP"/>
    <property type="match status" value="1"/>
</dbReference>
<dbReference type="PRINTS" id="PR00783">
    <property type="entry name" value="MINTRINSICP"/>
</dbReference>
<dbReference type="SUPFAM" id="SSF81338">
    <property type="entry name" value="Aquaporin-like"/>
    <property type="match status" value="1"/>
</dbReference>
<dbReference type="PROSITE" id="PS00221">
    <property type="entry name" value="MIP"/>
    <property type="match status" value="1"/>
</dbReference>
<proteinExistence type="evidence at transcript level"/>
<feature type="chain" id="PRO_0000064032" description="Probable aquaporin PIP1-2">
    <location>
        <begin position="1"/>
        <end position="288"/>
    </location>
</feature>
<feature type="transmembrane region" description="Helical; Name=1" evidence="2">
    <location>
        <begin position="57"/>
        <end position="77"/>
    </location>
</feature>
<feature type="transmembrane region" description="Helical; Name=2" evidence="2">
    <location>
        <begin position="92"/>
        <end position="114"/>
    </location>
</feature>
<feature type="transmembrane region" description="Helical; Name=3" evidence="2">
    <location>
        <begin position="135"/>
        <end position="155"/>
    </location>
</feature>
<feature type="transmembrane region" description="Helical; Name=4" evidence="2">
    <location>
        <begin position="177"/>
        <end position="197"/>
    </location>
</feature>
<feature type="transmembrane region" description="Helical; Name=5" evidence="2">
    <location>
        <begin position="211"/>
        <end position="231"/>
    </location>
</feature>
<feature type="transmembrane region" description="Helical; Name=6" evidence="2">
    <location>
        <begin position="259"/>
        <end position="279"/>
    </location>
</feature>
<feature type="region of interest" description="Disordered" evidence="3">
    <location>
        <begin position="1"/>
        <end position="37"/>
    </location>
</feature>
<feature type="short sequence motif" description="NPA 1">
    <location>
        <begin position="116"/>
        <end position="118"/>
    </location>
</feature>
<feature type="short sequence motif" description="NPA 2">
    <location>
        <begin position="237"/>
        <end position="239"/>
    </location>
</feature>
<feature type="sequence conflict" description="In Ref. 1; CAE01842." evidence="5" ref="1">
    <original>VLTV</original>
    <variation>ALNA</variation>
    <location>
        <begin position="71"/>
        <end position="74"/>
    </location>
</feature>
<feature type="sequence conflict" description="In Ref. 1; CAE01842 and 2; BAF15455." evidence="5" ref="1 2">
    <original>G</original>
    <variation>A</variation>
    <location>
        <position position="113"/>
    </location>
</feature>
<name>PIP12_ORYSJ</name>
<protein>
    <recommendedName>
        <fullName>Probable aquaporin PIP1-2</fullName>
    </recommendedName>
    <alternativeName>
        <fullName>OsPIP1;2</fullName>
    </alternativeName>
    <alternativeName>
        <fullName>Plasma membrane intrinsic protein 1-2</fullName>
    </alternativeName>
</protein>
<accession>Q7XSQ9</accession>
<accession>A0A0P0WDJ9</accession>
<accession>A3AWC8</accession>
<accession>Q0JB32</accession>
<keyword id="KW-1003">Cell membrane</keyword>
<keyword id="KW-0472">Membrane</keyword>
<keyword id="KW-1185">Reference proteome</keyword>
<keyword id="KW-0677">Repeat</keyword>
<keyword id="KW-0812">Transmembrane</keyword>
<keyword id="KW-1133">Transmembrane helix</keyword>
<keyword id="KW-0813">Transport</keyword>
<evidence type="ECO:0000250" key="1"/>
<evidence type="ECO:0000255" key="2"/>
<evidence type="ECO:0000256" key="3">
    <source>
        <dbReference type="SAM" id="MobiDB-lite"/>
    </source>
</evidence>
<evidence type="ECO:0000269" key="4">
    <source>
    </source>
</evidence>
<evidence type="ECO:0000305" key="5"/>
<reference key="1">
    <citation type="journal article" date="2002" name="Nature">
        <title>Sequence and analysis of rice chromosome 4.</title>
        <authorList>
            <person name="Feng Q."/>
            <person name="Zhang Y."/>
            <person name="Hao P."/>
            <person name="Wang S."/>
            <person name="Fu G."/>
            <person name="Huang Y."/>
            <person name="Li Y."/>
            <person name="Zhu J."/>
            <person name="Liu Y."/>
            <person name="Hu X."/>
            <person name="Jia P."/>
            <person name="Zhang Y."/>
            <person name="Zhao Q."/>
            <person name="Ying K."/>
            <person name="Yu S."/>
            <person name="Tang Y."/>
            <person name="Weng Q."/>
            <person name="Zhang L."/>
            <person name="Lu Y."/>
            <person name="Mu J."/>
            <person name="Lu Y."/>
            <person name="Zhang L.S."/>
            <person name="Yu Z."/>
            <person name="Fan D."/>
            <person name="Liu X."/>
            <person name="Lu T."/>
            <person name="Li C."/>
            <person name="Wu Y."/>
            <person name="Sun T."/>
            <person name="Lei H."/>
            <person name="Li T."/>
            <person name="Hu H."/>
            <person name="Guan J."/>
            <person name="Wu M."/>
            <person name="Zhang R."/>
            <person name="Zhou B."/>
            <person name="Chen Z."/>
            <person name="Chen L."/>
            <person name="Jin Z."/>
            <person name="Wang R."/>
            <person name="Yin H."/>
            <person name="Cai Z."/>
            <person name="Ren S."/>
            <person name="Lv G."/>
            <person name="Gu W."/>
            <person name="Zhu G."/>
            <person name="Tu Y."/>
            <person name="Jia J."/>
            <person name="Zhang Y."/>
            <person name="Chen J."/>
            <person name="Kang H."/>
            <person name="Chen X."/>
            <person name="Shao C."/>
            <person name="Sun Y."/>
            <person name="Hu Q."/>
            <person name="Zhang X."/>
            <person name="Zhang W."/>
            <person name="Wang L."/>
            <person name="Ding C."/>
            <person name="Sheng H."/>
            <person name="Gu J."/>
            <person name="Chen S."/>
            <person name="Ni L."/>
            <person name="Zhu F."/>
            <person name="Chen W."/>
            <person name="Lan L."/>
            <person name="Lai Y."/>
            <person name="Cheng Z."/>
            <person name="Gu M."/>
            <person name="Jiang J."/>
            <person name="Li J."/>
            <person name="Hong G."/>
            <person name="Xue Y."/>
            <person name="Han B."/>
        </authorList>
    </citation>
    <scope>NUCLEOTIDE SEQUENCE [LARGE SCALE GENOMIC DNA]</scope>
    <source>
        <strain>cv. Nipponbare</strain>
    </source>
</reference>
<reference key="2">
    <citation type="journal article" date="2005" name="Nature">
        <title>The map-based sequence of the rice genome.</title>
        <authorList>
            <consortium name="International rice genome sequencing project (IRGSP)"/>
        </authorList>
    </citation>
    <scope>NUCLEOTIDE SEQUENCE [LARGE SCALE GENOMIC DNA]</scope>
    <source>
        <strain>cv. Nipponbare</strain>
    </source>
</reference>
<reference key="3">
    <citation type="journal article" date="2008" name="Nucleic Acids Res.">
        <title>The rice annotation project database (RAP-DB): 2008 update.</title>
        <authorList>
            <consortium name="The rice annotation project (RAP)"/>
        </authorList>
    </citation>
    <scope>GENOME REANNOTATION</scope>
    <source>
        <strain>cv. Nipponbare</strain>
    </source>
</reference>
<reference key="4">
    <citation type="journal article" date="2013" name="Rice">
        <title>Improvement of the Oryza sativa Nipponbare reference genome using next generation sequence and optical map data.</title>
        <authorList>
            <person name="Kawahara Y."/>
            <person name="de la Bastide M."/>
            <person name="Hamilton J.P."/>
            <person name="Kanamori H."/>
            <person name="McCombie W.R."/>
            <person name="Ouyang S."/>
            <person name="Schwartz D.C."/>
            <person name="Tanaka T."/>
            <person name="Wu J."/>
            <person name="Zhou S."/>
            <person name="Childs K.L."/>
            <person name="Davidson R.M."/>
            <person name="Lin H."/>
            <person name="Quesada-Ocampo L."/>
            <person name="Vaillancourt B."/>
            <person name="Sakai H."/>
            <person name="Lee S.S."/>
            <person name="Kim J."/>
            <person name="Numa H."/>
            <person name="Itoh T."/>
            <person name="Buell C.R."/>
            <person name="Matsumoto T."/>
        </authorList>
    </citation>
    <scope>GENOME REANNOTATION</scope>
    <source>
        <strain>cv. Nipponbare</strain>
    </source>
</reference>
<reference key="5">
    <citation type="journal article" date="2005" name="PLoS Biol.">
        <title>The genomes of Oryza sativa: a history of duplications.</title>
        <authorList>
            <person name="Yu J."/>
            <person name="Wang J."/>
            <person name="Lin W."/>
            <person name="Li S."/>
            <person name="Li H."/>
            <person name="Zhou J."/>
            <person name="Ni P."/>
            <person name="Dong W."/>
            <person name="Hu S."/>
            <person name="Zeng C."/>
            <person name="Zhang J."/>
            <person name="Zhang Y."/>
            <person name="Li R."/>
            <person name="Xu Z."/>
            <person name="Li S."/>
            <person name="Li X."/>
            <person name="Zheng H."/>
            <person name="Cong L."/>
            <person name="Lin L."/>
            <person name="Yin J."/>
            <person name="Geng J."/>
            <person name="Li G."/>
            <person name="Shi J."/>
            <person name="Liu J."/>
            <person name="Lv H."/>
            <person name="Li J."/>
            <person name="Wang J."/>
            <person name="Deng Y."/>
            <person name="Ran L."/>
            <person name="Shi X."/>
            <person name="Wang X."/>
            <person name="Wu Q."/>
            <person name="Li C."/>
            <person name="Ren X."/>
            <person name="Wang J."/>
            <person name="Wang X."/>
            <person name="Li D."/>
            <person name="Liu D."/>
            <person name="Zhang X."/>
            <person name="Ji Z."/>
            <person name="Zhao W."/>
            <person name="Sun Y."/>
            <person name="Zhang Z."/>
            <person name="Bao J."/>
            <person name="Han Y."/>
            <person name="Dong L."/>
            <person name="Ji J."/>
            <person name="Chen P."/>
            <person name="Wu S."/>
            <person name="Liu J."/>
            <person name="Xiao Y."/>
            <person name="Bu D."/>
            <person name="Tan J."/>
            <person name="Yang L."/>
            <person name="Ye C."/>
            <person name="Zhang J."/>
            <person name="Xu J."/>
            <person name="Zhou Y."/>
            <person name="Yu Y."/>
            <person name="Zhang B."/>
            <person name="Zhuang S."/>
            <person name="Wei H."/>
            <person name="Liu B."/>
            <person name="Lei M."/>
            <person name="Yu H."/>
            <person name="Li Y."/>
            <person name="Xu H."/>
            <person name="Wei S."/>
            <person name="He X."/>
            <person name="Fang L."/>
            <person name="Zhang Z."/>
            <person name="Zhang Y."/>
            <person name="Huang X."/>
            <person name="Su Z."/>
            <person name="Tong W."/>
            <person name="Li J."/>
            <person name="Tong Z."/>
            <person name="Li S."/>
            <person name="Ye J."/>
            <person name="Wang L."/>
            <person name="Fang L."/>
            <person name="Lei T."/>
            <person name="Chen C.-S."/>
            <person name="Chen H.-C."/>
            <person name="Xu Z."/>
            <person name="Li H."/>
            <person name="Huang H."/>
            <person name="Zhang F."/>
            <person name="Xu H."/>
            <person name="Li N."/>
            <person name="Zhao C."/>
            <person name="Li S."/>
            <person name="Dong L."/>
            <person name="Huang Y."/>
            <person name="Li L."/>
            <person name="Xi Y."/>
            <person name="Qi Q."/>
            <person name="Li W."/>
            <person name="Zhang B."/>
            <person name="Hu W."/>
            <person name="Zhang Y."/>
            <person name="Tian X."/>
            <person name="Jiao Y."/>
            <person name="Liang X."/>
            <person name="Jin J."/>
            <person name="Gao L."/>
            <person name="Zheng W."/>
            <person name="Hao B."/>
            <person name="Liu S.-M."/>
            <person name="Wang W."/>
            <person name="Yuan L."/>
            <person name="Cao M."/>
            <person name="McDermott J."/>
            <person name="Samudrala R."/>
            <person name="Wang J."/>
            <person name="Wong G.K.-S."/>
            <person name="Yang H."/>
        </authorList>
    </citation>
    <scope>NUCLEOTIDE SEQUENCE [LARGE SCALE GENOMIC DNA]</scope>
    <source>
        <strain>cv. Nipponbare</strain>
    </source>
</reference>
<reference key="6">
    <citation type="journal article" date="2003" name="Science">
        <title>Collection, mapping, and annotation of over 28,000 cDNA clones from japonica rice.</title>
        <authorList>
            <consortium name="The rice full-length cDNA consortium"/>
        </authorList>
    </citation>
    <scope>NUCLEOTIDE SEQUENCE [LARGE SCALE MRNA]</scope>
    <source>
        <strain>cv. Nipponbare</strain>
    </source>
</reference>
<reference key="7">
    <citation type="journal article" date="2005" name="Plant Cell Physiol.">
        <title>Identification of 33 rice aquaporin genes and analysis of their expression and function.</title>
        <authorList>
            <person name="Sakurai J."/>
            <person name="Ishikawa F."/>
            <person name="Yamaguchi T."/>
            <person name="Uemura M."/>
            <person name="Maeshima M."/>
        </authorList>
    </citation>
    <scope>NOMENCLATURE</scope>
    <scope>TISSUE SPECIFICITY</scope>
    <scope>INDUCTION</scope>
</reference>